<name>GLPK_BACC3</name>
<protein>
    <recommendedName>
        <fullName evidence="1">Glycerol kinase</fullName>
        <ecNumber evidence="1">2.7.1.30</ecNumber>
    </recommendedName>
    <alternativeName>
        <fullName evidence="1">ATP:glycerol 3-phosphotransferase</fullName>
    </alternativeName>
    <alternativeName>
        <fullName evidence="1">Glycerokinase</fullName>
        <shortName evidence="1">GK</shortName>
    </alternativeName>
</protein>
<comment type="function">
    <text evidence="1">Key enzyme in the regulation of glycerol uptake and metabolism. Catalyzes the phosphorylation of glycerol to yield sn-glycerol 3-phosphate.</text>
</comment>
<comment type="catalytic activity">
    <reaction evidence="1">
        <text>glycerol + ATP = sn-glycerol 3-phosphate + ADP + H(+)</text>
        <dbReference type="Rhea" id="RHEA:21644"/>
        <dbReference type="ChEBI" id="CHEBI:15378"/>
        <dbReference type="ChEBI" id="CHEBI:17754"/>
        <dbReference type="ChEBI" id="CHEBI:30616"/>
        <dbReference type="ChEBI" id="CHEBI:57597"/>
        <dbReference type="ChEBI" id="CHEBI:456216"/>
        <dbReference type="EC" id="2.7.1.30"/>
    </reaction>
</comment>
<comment type="activity regulation">
    <text evidence="1">Activated by phosphorylation and inhibited by fructose 1,6-bisphosphate (FBP).</text>
</comment>
<comment type="pathway">
    <text evidence="1">Polyol metabolism; glycerol degradation via glycerol kinase pathway; sn-glycerol 3-phosphate from glycerol: step 1/1.</text>
</comment>
<comment type="subunit">
    <text evidence="1">Homotetramer and homodimer (in equilibrium).</text>
</comment>
<comment type="PTM">
    <text evidence="1">The phosphoenolpyruvate-dependent sugar phosphotransferase system (PTS), including enzyme I, and histidine-containing protein (HPr) are required for the phosphorylation, which leads to the activation of the enzyme.</text>
</comment>
<comment type="similarity">
    <text evidence="1">Belongs to the FGGY kinase family.</text>
</comment>
<proteinExistence type="inferred from homology"/>
<sequence length="496" mass="55014">MKKYILSLDQGTTSSRAILFNKKGEIVHSAQKEFTQHFPKPGWVEHNAQEIWGSILAVIATCLSEADVKPEQIAGIGITNQRETAVVWDKTTGKPIYNAIVWQSRQTAEICDELKEKGYGEMVREKTGLLIDAYFSGTKVKWILDNVEGAREKAENGDLLFGTIDTWLVWKLSGGKAHVTDYSNASRTLMFNIHDLQWDDELLDMLTVPKSMLPEVRPSSEVYGETIDYHFFGQNVPIAGVAGDQQAALFGQACFGEGMAKNTYGTGCFMLMNTGEKAVASEHGLLTTIAWGIDGKVNYALEGSIFVAGSAIQWLRDGMRMFKDASESEVYASRVESTDGVYVVPAFVGLGTPYWDSEVRGAMFGVTRGTTKEHFIRATLESLAYQTKDVLCAMEADSGIELKTLRVDGGAVKNNFLMKFQSDILDVPVERPVINETTALGAAYLAGLAVGYWKNQDEIKEQWHMDKRFEPTMEAETSEELYAGWKKAIEATKAFK</sequence>
<reference key="1">
    <citation type="submission" date="2009-02" db="EMBL/GenBank/DDBJ databases">
        <title>Genome sequence of Bacillus cereus 03BB102.</title>
        <authorList>
            <person name="Dodson R.J."/>
            <person name="Jackson P."/>
            <person name="Munk A.C."/>
            <person name="Brettin T."/>
            <person name="Bruce D."/>
            <person name="Detter C."/>
            <person name="Tapia R."/>
            <person name="Han C."/>
            <person name="Sutton G."/>
            <person name="Sims D."/>
        </authorList>
    </citation>
    <scope>NUCLEOTIDE SEQUENCE [LARGE SCALE GENOMIC DNA]</scope>
    <source>
        <strain>03BB102</strain>
    </source>
</reference>
<dbReference type="EC" id="2.7.1.30" evidence="1"/>
<dbReference type="EMBL" id="CP001407">
    <property type="protein sequence ID" value="ACO27198.1"/>
    <property type="molecule type" value="Genomic_DNA"/>
</dbReference>
<dbReference type="RefSeq" id="WP_000759987.1">
    <property type="nucleotide sequence ID" value="NZ_CP009318.1"/>
</dbReference>
<dbReference type="SMR" id="C1EKE4"/>
<dbReference type="GeneID" id="69533472"/>
<dbReference type="KEGG" id="bcx:BCA_1064"/>
<dbReference type="PATRIC" id="fig|572264.18.peg.1010"/>
<dbReference type="UniPathway" id="UPA00618">
    <property type="reaction ID" value="UER00672"/>
</dbReference>
<dbReference type="Proteomes" id="UP000002210">
    <property type="component" value="Chromosome"/>
</dbReference>
<dbReference type="GO" id="GO:0005829">
    <property type="term" value="C:cytosol"/>
    <property type="evidence" value="ECO:0007669"/>
    <property type="project" value="TreeGrafter"/>
</dbReference>
<dbReference type="GO" id="GO:0005524">
    <property type="term" value="F:ATP binding"/>
    <property type="evidence" value="ECO:0007669"/>
    <property type="project" value="UniProtKB-UniRule"/>
</dbReference>
<dbReference type="GO" id="GO:0004370">
    <property type="term" value="F:glycerol kinase activity"/>
    <property type="evidence" value="ECO:0000250"/>
    <property type="project" value="UniProtKB"/>
</dbReference>
<dbReference type="GO" id="GO:0019563">
    <property type="term" value="P:glycerol catabolic process"/>
    <property type="evidence" value="ECO:0007669"/>
    <property type="project" value="UniProtKB-UniRule"/>
</dbReference>
<dbReference type="GO" id="GO:0006071">
    <property type="term" value="P:glycerol metabolic process"/>
    <property type="evidence" value="ECO:0000250"/>
    <property type="project" value="UniProtKB"/>
</dbReference>
<dbReference type="GO" id="GO:0006072">
    <property type="term" value="P:glycerol-3-phosphate metabolic process"/>
    <property type="evidence" value="ECO:0007669"/>
    <property type="project" value="InterPro"/>
</dbReference>
<dbReference type="CDD" id="cd07786">
    <property type="entry name" value="FGGY_EcGK_like"/>
    <property type="match status" value="1"/>
</dbReference>
<dbReference type="FunFam" id="3.30.420.40:FF:000007">
    <property type="entry name" value="Glycerol kinase"/>
    <property type="match status" value="1"/>
</dbReference>
<dbReference type="FunFam" id="3.30.420.40:FF:000008">
    <property type="entry name" value="Glycerol kinase"/>
    <property type="match status" value="1"/>
</dbReference>
<dbReference type="Gene3D" id="3.30.420.40">
    <property type="match status" value="2"/>
</dbReference>
<dbReference type="HAMAP" id="MF_00186">
    <property type="entry name" value="Glycerol_kin"/>
    <property type="match status" value="1"/>
</dbReference>
<dbReference type="InterPro" id="IPR043129">
    <property type="entry name" value="ATPase_NBD"/>
</dbReference>
<dbReference type="InterPro" id="IPR000577">
    <property type="entry name" value="Carb_kinase_FGGY"/>
</dbReference>
<dbReference type="InterPro" id="IPR018483">
    <property type="entry name" value="Carb_kinase_FGGY_CS"/>
</dbReference>
<dbReference type="InterPro" id="IPR018485">
    <property type="entry name" value="FGGY_C"/>
</dbReference>
<dbReference type="InterPro" id="IPR018484">
    <property type="entry name" value="FGGY_N"/>
</dbReference>
<dbReference type="InterPro" id="IPR005999">
    <property type="entry name" value="Glycerol_kin"/>
</dbReference>
<dbReference type="NCBIfam" id="TIGR01311">
    <property type="entry name" value="glycerol_kin"/>
    <property type="match status" value="1"/>
</dbReference>
<dbReference type="NCBIfam" id="NF000756">
    <property type="entry name" value="PRK00047.1"/>
    <property type="match status" value="1"/>
</dbReference>
<dbReference type="PANTHER" id="PTHR10196:SF69">
    <property type="entry name" value="GLYCEROL KINASE"/>
    <property type="match status" value="1"/>
</dbReference>
<dbReference type="PANTHER" id="PTHR10196">
    <property type="entry name" value="SUGAR KINASE"/>
    <property type="match status" value="1"/>
</dbReference>
<dbReference type="Pfam" id="PF02782">
    <property type="entry name" value="FGGY_C"/>
    <property type="match status" value="1"/>
</dbReference>
<dbReference type="Pfam" id="PF00370">
    <property type="entry name" value="FGGY_N"/>
    <property type="match status" value="1"/>
</dbReference>
<dbReference type="PIRSF" id="PIRSF000538">
    <property type="entry name" value="GlpK"/>
    <property type="match status" value="1"/>
</dbReference>
<dbReference type="SUPFAM" id="SSF53067">
    <property type="entry name" value="Actin-like ATPase domain"/>
    <property type="match status" value="2"/>
</dbReference>
<dbReference type="PROSITE" id="PS00933">
    <property type="entry name" value="FGGY_KINASES_1"/>
    <property type="match status" value="1"/>
</dbReference>
<dbReference type="PROSITE" id="PS00445">
    <property type="entry name" value="FGGY_KINASES_2"/>
    <property type="match status" value="1"/>
</dbReference>
<evidence type="ECO:0000255" key="1">
    <source>
        <dbReference type="HAMAP-Rule" id="MF_00186"/>
    </source>
</evidence>
<organism>
    <name type="scientific">Bacillus cereus (strain 03BB102)</name>
    <dbReference type="NCBI Taxonomy" id="572264"/>
    <lineage>
        <taxon>Bacteria</taxon>
        <taxon>Bacillati</taxon>
        <taxon>Bacillota</taxon>
        <taxon>Bacilli</taxon>
        <taxon>Bacillales</taxon>
        <taxon>Bacillaceae</taxon>
        <taxon>Bacillus</taxon>
        <taxon>Bacillus cereus group</taxon>
    </lineage>
</organism>
<keyword id="KW-0067">ATP-binding</keyword>
<keyword id="KW-0319">Glycerol metabolism</keyword>
<keyword id="KW-0418">Kinase</keyword>
<keyword id="KW-0547">Nucleotide-binding</keyword>
<keyword id="KW-0597">Phosphoprotein</keyword>
<keyword id="KW-0808">Transferase</keyword>
<gene>
    <name evidence="1" type="primary">glpK</name>
    <name type="ordered locus">BCA_1064</name>
</gene>
<feature type="chain" id="PRO_1000124181" description="Glycerol kinase">
    <location>
        <begin position="1"/>
        <end position="496"/>
    </location>
</feature>
<feature type="binding site" evidence="1">
    <location>
        <position position="12"/>
    </location>
    <ligand>
        <name>ADP</name>
        <dbReference type="ChEBI" id="CHEBI:456216"/>
    </ligand>
</feature>
<feature type="binding site" evidence="1">
    <location>
        <position position="12"/>
    </location>
    <ligand>
        <name>ATP</name>
        <dbReference type="ChEBI" id="CHEBI:30616"/>
    </ligand>
</feature>
<feature type="binding site" evidence="1">
    <location>
        <position position="12"/>
    </location>
    <ligand>
        <name>sn-glycerol 3-phosphate</name>
        <dbReference type="ChEBI" id="CHEBI:57597"/>
    </ligand>
</feature>
<feature type="binding site" evidence="1">
    <location>
        <position position="13"/>
    </location>
    <ligand>
        <name>ATP</name>
        <dbReference type="ChEBI" id="CHEBI:30616"/>
    </ligand>
</feature>
<feature type="binding site" evidence="1">
    <location>
        <position position="14"/>
    </location>
    <ligand>
        <name>ATP</name>
        <dbReference type="ChEBI" id="CHEBI:30616"/>
    </ligand>
</feature>
<feature type="binding site" evidence="1">
    <location>
        <position position="16"/>
    </location>
    <ligand>
        <name>ADP</name>
        <dbReference type="ChEBI" id="CHEBI:456216"/>
    </ligand>
</feature>
<feature type="binding site" evidence="1">
    <location>
        <position position="82"/>
    </location>
    <ligand>
        <name>glycerol</name>
        <dbReference type="ChEBI" id="CHEBI:17754"/>
    </ligand>
</feature>
<feature type="binding site" evidence="1">
    <location>
        <position position="82"/>
    </location>
    <ligand>
        <name>sn-glycerol 3-phosphate</name>
        <dbReference type="ChEBI" id="CHEBI:57597"/>
    </ligand>
</feature>
<feature type="binding site" evidence="1">
    <location>
        <position position="83"/>
    </location>
    <ligand>
        <name>glycerol</name>
        <dbReference type="ChEBI" id="CHEBI:17754"/>
    </ligand>
</feature>
<feature type="binding site" evidence="1">
    <location>
        <position position="83"/>
    </location>
    <ligand>
        <name>sn-glycerol 3-phosphate</name>
        <dbReference type="ChEBI" id="CHEBI:57597"/>
    </ligand>
</feature>
<feature type="binding site" evidence="1">
    <location>
        <position position="134"/>
    </location>
    <ligand>
        <name>glycerol</name>
        <dbReference type="ChEBI" id="CHEBI:17754"/>
    </ligand>
</feature>
<feature type="binding site" evidence="1">
    <location>
        <position position="134"/>
    </location>
    <ligand>
        <name>sn-glycerol 3-phosphate</name>
        <dbReference type="ChEBI" id="CHEBI:57597"/>
    </ligand>
</feature>
<feature type="binding site" evidence="1">
    <location>
        <position position="244"/>
    </location>
    <ligand>
        <name>glycerol</name>
        <dbReference type="ChEBI" id="CHEBI:17754"/>
    </ligand>
</feature>
<feature type="binding site" evidence="1">
    <location>
        <position position="244"/>
    </location>
    <ligand>
        <name>sn-glycerol 3-phosphate</name>
        <dbReference type="ChEBI" id="CHEBI:57597"/>
    </ligand>
</feature>
<feature type="binding site" evidence="1">
    <location>
        <position position="245"/>
    </location>
    <ligand>
        <name>glycerol</name>
        <dbReference type="ChEBI" id="CHEBI:17754"/>
    </ligand>
</feature>
<feature type="binding site" evidence="1">
    <location>
        <position position="266"/>
    </location>
    <ligand>
        <name>ADP</name>
        <dbReference type="ChEBI" id="CHEBI:456216"/>
    </ligand>
</feature>
<feature type="binding site" evidence="1">
    <location>
        <position position="266"/>
    </location>
    <ligand>
        <name>ATP</name>
        <dbReference type="ChEBI" id="CHEBI:30616"/>
    </ligand>
</feature>
<feature type="binding site" evidence="1">
    <location>
        <position position="309"/>
    </location>
    <ligand>
        <name>ADP</name>
        <dbReference type="ChEBI" id="CHEBI:456216"/>
    </ligand>
</feature>
<feature type="binding site" evidence="1">
    <location>
        <position position="309"/>
    </location>
    <ligand>
        <name>ATP</name>
        <dbReference type="ChEBI" id="CHEBI:30616"/>
    </ligand>
</feature>
<feature type="binding site" evidence="1">
    <location>
        <position position="313"/>
    </location>
    <ligand>
        <name>ATP</name>
        <dbReference type="ChEBI" id="CHEBI:30616"/>
    </ligand>
</feature>
<feature type="binding site" evidence="1">
    <location>
        <position position="410"/>
    </location>
    <ligand>
        <name>ADP</name>
        <dbReference type="ChEBI" id="CHEBI:456216"/>
    </ligand>
</feature>
<feature type="binding site" evidence="1">
    <location>
        <position position="410"/>
    </location>
    <ligand>
        <name>ATP</name>
        <dbReference type="ChEBI" id="CHEBI:30616"/>
    </ligand>
</feature>
<feature type="binding site" evidence="1">
    <location>
        <position position="414"/>
    </location>
    <ligand>
        <name>ADP</name>
        <dbReference type="ChEBI" id="CHEBI:456216"/>
    </ligand>
</feature>
<feature type="modified residue" description="Phosphohistidine; by HPr" evidence="1">
    <location>
        <position position="230"/>
    </location>
</feature>
<accession>C1EKE4</accession>